<organism>
    <name type="scientific">Burkholderia cenocepacia (strain ATCC BAA-245 / DSM 16553 / LMG 16656 / NCTC 13227 / J2315 / CF5610)</name>
    <name type="common">Burkholderia cepacia (strain J2315)</name>
    <dbReference type="NCBI Taxonomy" id="216591"/>
    <lineage>
        <taxon>Bacteria</taxon>
        <taxon>Pseudomonadati</taxon>
        <taxon>Pseudomonadota</taxon>
        <taxon>Betaproteobacteria</taxon>
        <taxon>Burkholderiales</taxon>
        <taxon>Burkholderiaceae</taxon>
        <taxon>Burkholderia</taxon>
        <taxon>Burkholderia cepacia complex</taxon>
    </lineage>
</organism>
<protein>
    <recommendedName>
        <fullName evidence="1">Betaine aldehyde dehydrogenase</fullName>
        <shortName evidence="1">BADH</shortName>
        <ecNumber evidence="1">1.2.1.8</ecNumber>
    </recommendedName>
</protein>
<dbReference type="EC" id="1.2.1.8" evidence="1"/>
<dbReference type="EMBL" id="AM747721">
    <property type="protein sequence ID" value="CAR56201.1"/>
    <property type="molecule type" value="Genomic_DNA"/>
</dbReference>
<dbReference type="RefSeq" id="WP_006482702.1">
    <property type="nucleotide sequence ID" value="NC_011001.1"/>
</dbReference>
<dbReference type="SMR" id="B4EHJ1"/>
<dbReference type="KEGG" id="bcj:BCAM2342"/>
<dbReference type="eggNOG" id="COG1012">
    <property type="taxonomic scope" value="Bacteria"/>
</dbReference>
<dbReference type="HOGENOM" id="CLU_005391_1_0_4"/>
<dbReference type="BioCyc" id="BCEN216591:G1G1V-6422-MONOMER"/>
<dbReference type="UniPathway" id="UPA00529">
    <property type="reaction ID" value="UER00386"/>
</dbReference>
<dbReference type="Proteomes" id="UP000001035">
    <property type="component" value="Chromosome 2"/>
</dbReference>
<dbReference type="GO" id="GO:0008802">
    <property type="term" value="F:betaine-aldehyde dehydrogenase (NAD+) activity"/>
    <property type="evidence" value="ECO:0007669"/>
    <property type="project" value="UniProtKB-UniRule"/>
</dbReference>
<dbReference type="GO" id="GO:0046872">
    <property type="term" value="F:metal ion binding"/>
    <property type="evidence" value="ECO:0007669"/>
    <property type="project" value="UniProtKB-KW"/>
</dbReference>
<dbReference type="GO" id="GO:0019285">
    <property type="term" value="P:glycine betaine biosynthetic process from choline"/>
    <property type="evidence" value="ECO:0007669"/>
    <property type="project" value="UniProtKB-UniRule"/>
</dbReference>
<dbReference type="CDD" id="cd07090">
    <property type="entry name" value="ALDH_F9_TMBADH"/>
    <property type="match status" value="1"/>
</dbReference>
<dbReference type="FunFam" id="3.40.309.10:FF:000014">
    <property type="entry name" value="NAD/NADP-dependent betaine aldehyde dehydrogenase"/>
    <property type="match status" value="1"/>
</dbReference>
<dbReference type="FunFam" id="3.40.605.10:FF:000007">
    <property type="entry name" value="NAD/NADP-dependent betaine aldehyde dehydrogenase"/>
    <property type="match status" value="1"/>
</dbReference>
<dbReference type="Gene3D" id="3.40.605.10">
    <property type="entry name" value="Aldehyde Dehydrogenase, Chain A, domain 1"/>
    <property type="match status" value="1"/>
</dbReference>
<dbReference type="Gene3D" id="3.40.309.10">
    <property type="entry name" value="Aldehyde Dehydrogenase, Chain A, domain 2"/>
    <property type="match status" value="1"/>
</dbReference>
<dbReference type="HAMAP" id="MF_00804">
    <property type="entry name" value="BADH"/>
    <property type="match status" value="1"/>
</dbReference>
<dbReference type="InterPro" id="IPR016161">
    <property type="entry name" value="Ald_DH/histidinol_DH"/>
</dbReference>
<dbReference type="InterPro" id="IPR016163">
    <property type="entry name" value="Ald_DH_C"/>
</dbReference>
<dbReference type="InterPro" id="IPR016160">
    <property type="entry name" value="Ald_DH_CS_CYS"/>
</dbReference>
<dbReference type="InterPro" id="IPR029510">
    <property type="entry name" value="Ald_DH_CS_GLU"/>
</dbReference>
<dbReference type="InterPro" id="IPR016162">
    <property type="entry name" value="Ald_DH_N"/>
</dbReference>
<dbReference type="InterPro" id="IPR015590">
    <property type="entry name" value="Aldehyde_DH_dom"/>
</dbReference>
<dbReference type="InterPro" id="IPR011264">
    <property type="entry name" value="BADH"/>
</dbReference>
<dbReference type="NCBIfam" id="TIGR01804">
    <property type="entry name" value="BADH"/>
    <property type="match status" value="1"/>
</dbReference>
<dbReference type="NCBIfam" id="NF009725">
    <property type="entry name" value="PRK13252.1"/>
    <property type="match status" value="1"/>
</dbReference>
<dbReference type="PANTHER" id="PTHR11699">
    <property type="entry name" value="ALDEHYDE DEHYDROGENASE-RELATED"/>
    <property type="match status" value="1"/>
</dbReference>
<dbReference type="Pfam" id="PF00171">
    <property type="entry name" value="Aldedh"/>
    <property type="match status" value="1"/>
</dbReference>
<dbReference type="SUPFAM" id="SSF53720">
    <property type="entry name" value="ALDH-like"/>
    <property type="match status" value="1"/>
</dbReference>
<dbReference type="PROSITE" id="PS00070">
    <property type="entry name" value="ALDEHYDE_DEHYDR_CYS"/>
    <property type="match status" value="1"/>
</dbReference>
<dbReference type="PROSITE" id="PS00687">
    <property type="entry name" value="ALDEHYDE_DEHYDR_GLU"/>
    <property type="match status" value="1"/>
</dbReference>
<comment type="function">
    <text evidence="1">Involved in the biosynthesis of the osmoprotectant glycine betaine. Catalyzes the irreversible oxidation of betaine aldehyde to the corresponding acid.</text>
</comment>
<comment type="catalytic activity">
    <reaction evidence="1">
        <text>betaine aldehyde + NAD(+) + H2O = glycine betaine + NADH + 2 H(+)</text>
        <dbReference type="Rhea" id="RHEA:15305"/>
        <dbReference type="ChEBI" id="CHEBI:15377"/>
        <dbReference type="ChEBI" id="CHEBI:15378"/>
        <dbReference type="ChEBI" id="CHEBI:15710"/>
        <dbReference type="ChEBI" id="CHEBI:17750"/>
        <dbReference type="ChEBI" id="CHEBI:57540"/>
        <dbReference type="ChEBI" id="CHEBI:57945"/>
        <dbReference type="EC" id="1.2.1.8"/>
    </reaction>
    <physiologicalReaction direction="left-to-right" evidence="1">
        <dbReference type="Rhea" id="RHEA:15306"/>
    </physiologicalReaction>
</comment>
<comment type="cofactor">
    <cofactor evidence="1">
        <name>K(+)</name>
        <dbReference type="ChEBI" id="CHEBI:29103"/>
    </cofactor>
    <text evidence="1">Binds 2 potassium ions per subunit.</text>
</comment>
<comment type="pathway">
    <text evidence="1">Amine and polyamine biosynthesis; betaine biosynthesis via choline pathway; betaine from betaine aldehyde: step 1/1.</text>
</comment>
<comment type="subunit">
    <text evidence="1">Dimer of dimers.</text>
</comment>
<comment type="similarity">
    <text evidence="1">Belongs to the aldehyde dehydrogenase family.</text>
</comment>
<accession>B4EHJ1</accession>
<proteinExistence type="inferred from homology"/>
<name>BETB_BURCJ</name>
<keyword id="KW-0479">Metal-binding</keyword>
<keyword id="KW-0520">NAD</keyword>
<keyword id="KW-0521">NADP</keyword>
<keyword id="KW-0558">Oxidation</keyword>
<keyword id="KW-0560">Oxidoreductase</keyword>
<keyword id="KW-0630">Potassium</keyword>
<gene>
    <name evidence="1" type="primary">betB</name>
    <name type="ordered locus">BceJ2315_57780</name>
    <name type="ORF">BCAM2342</name>
</gene>
<sequence length="489" mass="52332">MSVYGLQRLYIGGGYVDATSGKTFDTFDPATGELLAQVQQASAADVDRAVASAQEGQREWAAMTAMQRSRILRRAVDLLRERNDELAAIETRDTGKPIGETLAVDIVTGADVIEYYAGLATAIEGLQVPLRAESFVYTRREPLGVCAGIGAWNYPIQIACWKTAPALAAGNAMVFKPSEVTPLTALKLAEIYTEAGVPAGVFNVVQGDGSVGALLTGHPDIAKVSFTGGVETGKKVMSLAGASSLKEVTMELGGKSPLIVFDDADLDRAADIAVTANFFSSGQVCTNGTRVFMHRSVKDAFTQKVLERVKRIRVGKPTDADTNFGPLVSAAQLDKVLGFIESGKAEGAKLLAGGTRLTDGHFGSGQYVAPTVFGDCRDDMKIVREEIFGPVMSILDFESEDEVIARANDTHYGLAAGVVTENLSRAHRTIHRLEAGICWINTWGESPAEMPVGGYKQSGVGRENGITTLEHYTRIKSVQVELGRYNPVF</sequence>
<evidence type="ECO:0000255" key="1">
    <source>
        <dbReference type="HAMAP-Rule" id="MF_00804"/>
    </source>
</evidence>
<feature type="chain" id="PRO_1000133942" description="Betaine aldehyde dehydrogenase">
    <location>
        <begin position="1"/>
        <end position="489"/>
    </location>
</feature>
<feature type="active site" description="Charge relay system" evidence="1">
    <location>
        <position position="162"/>
    </location>
</feature>
<feature type="active site" description="Proton acceptor" evidence="1">
    <location>
        <position position="251"/>
    </location>
</feature>
<feature type="active site" description="Nucleophile" evidence="1">
    <location>
        <position position="285"/>
    </location>
</feature>
<feature type="active site" description="Charge relay system" evidence="1">
    <location>
        <position position="463"/>
    </location>
</feature>
<feature type="binding site" evidence="1">
    <location>
        <position position="26"/>
    </location>
    <ligand>
        <name>K(+)</name>
        <dbReference type="ChEBI" id="CHEBI:29103"/>
        <label>1</label>
    </ligand>
</feature>
<feature type="binding site" evidence="1">
    <location>
        <position position="93"/>
    </location>
    <ligand>
        <name>K(+)</name>
        <dbReference type="ChEBI" id="CHEBI:29103"/>
        <label>1</label>
    </ligand>
</feature>
<feature type="binding site" evidence="1">
    <location>
        <begin position="150"/>
        <end position="152"/>
    </location>
    <ligand>
        <name>NAD(+)</name>
        <dbReference type="ChEBI" id="CHEBI:57540"/>
    </ligand>
</feature>
<feature type="binding site" evidence="1">
    <location>
        <begin position="176"/>
        <end position="179"/>
    </location>
    <ligand>
        <name>NAD(+)</name>
        <dbReference type="ChEBI" id="CHEBI:57540"/>
    </ligand>
</feature>
<feature type="binding site" evidence="1">
    <location>
        <position position="180"/>
    </location>
    <ligand>
        <name>K(+)</name>
        <dbReference type="ChEBI" id="CHEBI:29103"/>
        <label>1</label>
    </ligand>
</feature>
<feature type="binding site" evidence="1">
    <location>
        <begin position="229"/>
        <end position="232"/>
    </location>
    <ligand>
        <name>NAD(+)</name>
        <dbReference type="ChEBI" id="CHEBI:57540"/>
    </ligand>
</feature>
<feature type="binding site" evidence="1">
    <location>
        <position position="245"/>
    </location>
    <ligand>
        <name>K(+)</name>
        <dbReference type="ChEBI" id="CHEBI:29103"/>
        <label>2</label>
    </ligand>
</feature>
<feature type="binding site" evidence="1">
    <location>
        <position position="253"/>
    </location>
    <ligand>
        <name>NAD(+)</name>
        <dbReference type="ChEBI" id="CHEBI:57540"/>
    </ligand>
</feature>
<feature type="binding site" description="covalent" evidence="1">
    <location>
        <position position="285"/>
    </location>
    <ligand>
        <name>NAD(+)</name>
        <dbReference type="ChEBI" id="CHEBI:57540"/>
    </ligand>
</feature>
<feature type="binding site" evidence="1">
    <location>
        <position position="386"/>
    </location>
    <ligand>
        <name>NAD(+)</name>
        <dbReference type="ChEBI" id="CHEBI:57540"/>
    </ligand>
</feature>
<feature type="binding site" evidence="1">
    <location>
        <position position="456"/>
    </location>
    <ligand>
        <name>K(+)</name>
        <dbReference type="ChEBI" id="CHEBI:29103"/>
        <label>2</label>
    </ligand>
</feature>
<feature type="binding site" evidence="1">
    <location>
        <position position="459"/>
    </location>
    <ligand>
        <name>K(+)</name>
        <dbReference type="ChEBI" id="CHEBI:29103"/>
        <label>2</label>
    </ligand>
</feature>
<feature type="site" description="Seems to be a necessary countercharge to the potassium cations" evidence="1">
    <location>
        <position position="247"/>
    </location>
</feature>
<feature type="modified residue" description="Cysteine sulfenic acid (-SOH)" evidence="1">
    <location>
        <position position="285"/>
    </location>
</feature>
<reference key="1">
    <citation type="journal article" date="2009" name="J. Bacteriol.">
        <title>The genome of Burkholderia cenocepacia J2315, an epidemic pathogen of cystic fibrosis patients.</title>
        <authorList>
            <person name="Holden M.T."/>
            <person name="Seth-Smith H.M."/>
            <person name="Crossman L.C."/>
            <person name="Sebaihia M."/>
            <person name="Bentley S.D."/>
            <person name="Cerdeno-Tarraga A.M."/>
            <person name="Thomson N.R."/>
            <person name="Bason N."/>
            <person name="Quail M.A."/>
            <person name="Sharp S."/>
            <person name="Cherevach I."/>
            <person name="Churcher C."/>
            <person name="Goodhead I."/>
            <person name="Hauser H."/>
            <person name="Holroyd N."/>
            <person name="Mungall K."/>
            <person name="Scott P."/>
            <person name="Walker D."/>
            <person name="White B."/>
            <person name="Rose H."/>
            <person name="Iversen P."/>
            <person name="Mil-Homens D."/>
            <person name="Rocha E.P."/>
            <person name="Fialho A.M."/>
            <person name="Baldwin A."/>
            <person name="Dowson C."/>
            <person name="Barrell B.G."/>
            <person name="Govan J.R."/>
            <person name="Vandamme P."/>
            <person name="Hart C.A."/>
            <person name="Mahenthiralingam E."/>
            <person name="Parkhill J."/>
        </authorList>
    </citation>
    <scope>NUCLEOTIDE SEQUENCE [LARGE SCALE GENOMIC DNA]</scope>
    <source>
        <strain>ATCC BAA-245 / DSM 16553 / LMG 16656 / NCTC 13227 / J2315 / CF5610</strain>
    </source>
</reference>